<organism>
    <name type="scientific">Staphylococcus aureus (strain bovine RF122 / ET3-1)</name>
    <dbReference type="NCBI Taxonomy" id="273036"/>
    <lineage>
        <taxon>Bacteria</taxon>
        <taxon>Bacillati</taxon>
        <taxon>Bacillota</taxon>
        <taxon>Bacilli</taxon>
        <taxon>Bacillales</taxon>
        <taxon>Staphylococcaceae</taxon>
        <taxon>Staphylococcus</taxon>
    </lineage>
</organism>
<gene>
    <name type="primary">sbcD</name>
    <name type="ordered locus">SAB1203</name>
</gene>
<evidence type="ECO:0000250" key="1"/>
<evidence type="ECO:0000305" key="2"/>
<name>SBCD_STAAB</name>
<accession>Q2YXX1</accession>
<protein>
    <recommendedName>
        <fullName>Nuclease SbcCD subunit D</fullName>
    </recommendedName>
</protein>
<proteinExistence type="inferred from homology"/>
<reference key="1">
    <citation type="journal article" date="2007" name="PLoS ONE">
        <title>Molecular correlates of host specialization in Staphylococcus aureus.</title>
        <authorList>
            <person name="Herron-Olson L."/>
            <person name="Fitzgerald J.R."/>
            <person name="Musser J.M."/>
            <person name="Kapur V."/>
        </authorList>
    </citation>
    <scope>NUCLEOTIDE SEQUENCE [LARGE SCALE GENOMIC DNA]</scope>
    <source>
        <strain>bovine RF122 / ET3-1</strain>
    </source>
</reference>
<feature type="chain" id="PRO_0000338478" description="Nuclease SbcCD subunit D">
    <location>
        <begin position="1"/>
        <end position="373"/>
    </location>
</feature>
<dbReference type="EMBL" id="AJ938182">
    <property type="protein sequence ID" value="CAI80892.1"/>
    <property type="molecule type" value="Genomic_DNA"/>
</dbReference>
<dbReference type="RefSeq" id="WP_000691313.1">
    <property type="nucleotide sequence ID" value="NC_007622.1"/>
</dbReference>
<dbReference type="SMR" id="Q2YXX1"/>
<dbReference type="KEGG" id="sab:SAB1203"/>
<dbReference type="HOGENOM" id="CLU_038045_0_1_9"/>
<dbReference type="GO" id="GO:0008408">
    <property type="term" value="F:3'-5' exonuclease activity"/>
    <property type="evidence" value="ECO:0007669"/>
    <property type="project" value="InterPro"/>
</dbReference>
<dbReference type="GO" id="GO:0004519">
    <property type="term" value="F:endonuclease activity"/>
    <property type="evidence" value="ECO:0007669"/>
    <property type="project" value="UniProtKB-KW"/>
</dbReference>
<dbReference type="GO" id="GO:0006310">
    <property type="term" value="P:DNA recombination"/>
    <property type="evidence" value="ECO:0007669"/>
    <property type="project" value="UniProtKB-KW"/>
</dbReference>
<dbReference type="GO" id="GO:0006260">
    <property type="term" value="P:DNA replication"/>
    <property type="evidence" value="ECO:0007669"/>
    <property type="project" value="UniProtKB-KW"/>
</dbReference>
<dbReference type="CDD" id="cd00840">
    <property type="entry name" value="MPP_Mre11_N"/>
    <property type="match status" value="1"/>
</dbReference>
<dbReference type="Gene3D" id="3.60.21.10">
    <property type="match status" value="1"/>
</dbReference>
<dbReference type="InterPro" id="IPR004843">
    <property type="entry name" value="Calcineurin-like_PHP_ApaH"/>
</dbReference>
<dbReference type="InterPro" id="IPR050535">
    <property type="entry name" value="DNA_Repair-Maintenance_Comp"/>
</dbReference>
<dbReference type="InterPro" id="IPR029052">
    <property type="entry name" value="Metallo-depent_PP-like"/>
</dbReference>
<dbReference type="InterPro" id="IPR041796">
    <property type="entry name" value="Mre11_N"/>
</dbReference>
<dbReference type="InterPro" id="IPR053381">
    <property type="entry name" value="SbcCD_nuclease"/>
</dbReference>
<dbReference type="InterPro" id="IPR004593">
    <property type="entry name" value="SbcD"/>
</dbReference>
<dbReference type="InterPro" id="IPR026843">
    <property type="entry name" value="SbcD_C"/>
</dbReference>
<dbReference type="NCBIfam" id="TIGR00619">
    <property type="entry name" value="sbcd"/>
    <property type="match status" value="1"/>
</dbReference>
<dbReference type="NCBIfam" id="NF041753">
    <property type="entry name" value="sbcd_Staph"/>
    <property type="match status" value="1"/>
</dbReference>
<dbReference type="PANTHER" id="PTHR30337">
    <property type="entry name" value="COMPONENT OF ATP-DEPENDENT DSDNA EXONUCLEASE"/>
    <property type="match status" value="1"/>
</dbReference>
<dbReference type="PANTHER" id="PTHR30337:SF0">
    <property type="entry name" value="NUCLEASE SBCCD SUBUNIT D"/>
    <property type="match status" value="1"/>
</dbReference>
<dbReference type="Pfam" id="PF00149">
    <property type="entry name" value="Metallophos"/>
    <property type="match status" value="1"/>
</dbReference>
<dbReference type="Pfam" id="PF12320">
    <property type="entry name" value="SbcD_C"/>
    <property type="match status" value="1"/>
</dbReference>
<dbReference type="SUPFAM" id="SSF56300">
    <property type="entry name" value="Metallo-dependent phosphatases"/>
    <property type="match status" value="1"/>
</dbReference>
<comment type="function">
    <text evidence="1">SbcCD cleaves DNA hairpin structures. These structures can inhibit DNA replication and are intermediates in certain DNA recombination reactions. The complex acts as a 3'-&gt;5' double strand exonuclease that can open hairpins. It also has a 5' single-strand endonuclease activity (By similarity).</text>
</comment>
<comment type="subunit">
    <text evidence="1">Heterodimer of SbcC and SbcD.</text>
</comment>
<comment type="similarity">
    <text evidence="2">Belongs to the SbcD family.</text>
</comment>
<sequence length="373" mass="42915">MKIIHTADWHLGKILNGKQLLEDQTYILDMFVEKMKEEEPDIIVIAGDLYDTTYPSKDAIMLLEQAIGKLNLELRIPIIMISGNHDGKERLNYGASWFEHNQLFIRTDFTSINSPIEINGVNFYTLPYATVSEMKHYFEDDTIETHQQGITRCIETIAPAIDEVAVNILISHLTVQGGKTSDSERPLTIGTVESVQKGVFDIFDYVMLGHLHHPFSIEDDKIKYSGSLLQYSFSEAGQAKGYRRVTINDGIINDVFIPLKSLRQLEIISGEYNDVINEKVHVKNKDNYLHFKLKNMSHITDPMMSLKQIYPNTLALTNETFNYNEENNTIEISEKDDMSIIEMFYNHITDKKLSDIQSKKIKNILENELRKED</sequence>
<keyword id="KW-0233">DNA recombination</keyword>
<keyword id="KW-0235">DNA replication</keyword>
<keyword id="KW-0255">Endonuclease</keyword>
<keyword id="KW-0269">Exonuclease</keyword>
<keyword id="KW-0378">Hydrolase</keyword>
<keyword id="KW-0540">Nuclease</keyword>